<evidence type="ECO:0000256" key="1">
    <source>
        <dbReference type="SAM" id="MobiDB-lite"/>
    </source>
</evidence>
<evidence type="ECO:0000269" key="2">
    <source>
    </source>
</evidence>
<evidence type="ECO:0000303" key="3">
    <source>
    </source>
</evidence>
<evidence type="ECO:0000305" key="4"/>
<protein>
    <recommendedName>
        <fullName>Unknown endosperm protein L</fullName>
    </recommendedName>
</protein>
<proteinExistence type="evidence at protein level"/>
<organism>
    <name type="scientific">Hordeum vulgare</name>
    <name type="common">Barley</name>
    <dbReference type="NCBI Taxonomy" id="4513"/>
    <lineage>
        <taxon>Eukaryota</taxon>
        <taxon>Viridiplantae</taxon>
        <taxon>Streptophyta</taxon>
        <taxon>Embryophyta</taxon>
        <taxon>Tracheophyta</taxon>
        <taxon>Spermatophyta</taxon>
        <taxon>Magnoliopsida</taxon>
        <taxon>Liliopsida</taxon>
        <taxon>Poales</taxon>
        <taxon>Poaceae</taxon>
        <taxon>BOP clade</taxon>
        <taxon>Pooideae</taxon>
        <taxon>Triticodae</taxon>
        <taxon>Triticeae</taxon>
        <taxon>Hordeinae</taxon>
        <taxon>Hordeum</taxon>
    </lineage>
</organism>
<feature type="chain" id="PRO_0000278137" description="Unknown endosperm protein L">
    <location>
        <begin position="1" status="less than"/>
        <end position="22" status="greater than"/>
    </location>
</feature>
<feature type="region of interest" description="Disordered" evidence="1">
    <location>
        <begin position="1"/>
        <end position="22"/>
    </location>
</feature>
<feature type="compositionally biased region" description="Basic and acidic residues" evidence="1">
    <location>
        <begin position="1"/>
        <end position="11"/>
    </location>
</feature>
<feature type="compositionally biased region" description="Polar residues" evidence="1">
    <location>
        <begin position="13"/>
        <end position="22"/>
    </location>
</feature>
<feature type="non-consecutive residues" evidence="3">
    <location>
        <begin position="11"/>
        <end position="12"/>
    </location>
</feature>
<feature type="non-terminal residue" evidence="3">
    <location>
        <position position="1"/>
    </location>
</feature>
<feature type="non-terminal residue" evidence="3">
    <location>
        <position position="22"/>
    </location>
</feature>
<keyword id="KW-0903">Direct protein sequencing</keyword>
<comment type="PTM">
    <text evidence="2">The N-terminus is blocked.</text>
</comment>
<comment type="miscellaneous">
    <text evidence="2">On the 2D-gel the determined pI of this unknown protein is: 7.5, its MW is: 38.5 kDa.</text>
</comment>
<name>UEPL_HORVU</name>
<sequence length="22" mass="2651">MRHSNKIRDEEMVNNTRLNXXA</sequence>
<reference evidence="4" key="1">
    <citation type="journal article" date="2000" name="Electrophoresis">
        <title>Separation and characterization of basic barley seed proteins.</title>
        <authorList>
            <person name="Kristoffersen H.E."/>
            <person name="Flengsrud R."/>
        </authorList>
    </citation>
    <scope>PROTEIN SEQUENCE</scope>
    <source>
        <strain evidence="2">cv. Bomi</strain>
        <tissue evidence="2">Starchy endosperm</tissue>
    </source>
</reference>
<accession>P82939</accession>